<protein>
    <recommendedName>
        <fullName>PRA1 family protein B6</fullName>
        <shortName>AtPRA1.B6</shortName>
    </recommendedName>
    <alternativeName>
        <fullName>Prenylated Rab acceptor 3</fullName>
    </alternativeName>
</protein>
<sequence>MASPLLPTSTTPDQLPGGDPQLLSSLRVLLSRVLATVRHASADARPWAELVDRSAFSRPPSLSEATSRVRKNFSYFRANYITLVAILLAASLLTHPFALFLLASLAASWLFLYFFRPADQPLVIGGRTFSDLETLGILCLSTVVVMFMTSVGSLLMSTLAVGIMGVAIHGAFRAPEDLFLEEQEAIGSGLFAFFNNNASNAAAAAIATSAMSRVRV</sequence>
<keyword id="KW-0007">Acetylation</keyword>
<keyword id="KW-0256">Endoplasmic reticulum</keyword>
<keyword id="KW-0472">Membrane</keyword>
<keyword id="KW-1185">Reference proteome</keyword>
<keyword id="KW-0812">Transmembrane</keyword>
<keyword id="KW-1133">Transmembrane helix</keyword>
<keyword id="KW-0813">Transport</keyword>
<name>PR1B6_ARATH</name>
<organism>
    <name type="scientific">Arabidopsis thaliana</name>
    <name type="common">Mouse-ear cress</name>
    <dbReference type="NCBI Taxonomy" id="3702"/>
    <lineage>
        <taxon>Eukaryota</taxon>
        <taxon>Viridiplantae</taxon>
        <taxon>Streptophyta</taxon>
        <taxon>Embryophyta</taxon>
        <taxon>Tracheophyta</taxon>
        <taxon>Spermatophyta</taxon>
        <taxon>Magnoliopsida</taxon>
        <taxon>eudicotyledons</taxon>
        <taxon>Gunneridae</taxon>
        <taxon>Pentapetalae</taxon>
        <taxon>rosids</taxon>
        <taxon>malvids</taxon>
        <taxon>Brassicales</taxon>
        <taxon>Brassicaceae</taxon>
        <taxon>Camelineae</taxon>
        <taxon>Arabidopsis</taxon>
    </lineage>
</organism>
<feature type="initiator methionine" description="Removed" evidence="5">
    <location>
        <position position="1"/>
    </location>
</feature>
<feature type="chain" id="PRO_0000352255" description="PRA1 family protein B6">
    <location>
        <begin position="2"/>
        <end position="216"/>
    </location>
</feature>
<feature type="transmembrane region" description="Helical" evidence="2">
    <location>
        <begin position="83"/>
        <end position="103"/>
    </location>
</feature>
<feature type="transmembrane region" description="Helical" evidence="2">
    <location>
        <begin position="105"/>
        <end position="125"/>
    </location>
</feature>
<feature type="transmembrane region" description="Helical" evidence="2">
    <location>
        <begin position="135"/>
        <end position="155"/>
    </location>
</feature>
<feature type="transmembrane region" description="Helical" evidence="2">
    <location>
        <begin position="159"/>
        <end position="179"/>
    </location>
</feature>
<feature type="transmembrane region" description="Helical" evidence="2">
    <location>
        <begin position="186"/>
        <end position="206"/>
    </location>
</feature>
<feature type="modified residue" description="N-acetylalanine" evidence="5">
    <location>
        <position position="2"/>
    </location>
</feature>
<gene>
    <name type="primary">PRA1B6</name>
    <name type="synonym">PRA3</name>
    <name type="ordered locus">At5g07110</name>
    <name type="ORF">T28J14.50</name>
</gene>
<reference key="1">
    <citation type="submission" date="1999-09" db="EMBL/GenBank/DDBJ databases">
        <title>Isolation and characterization of members of a new protein family from Arabidopsis thaliana that specifically interact with prenylated Rab proteins and SNAREs.</title>
        <authorList>
            <person name="Pay A."/>
            <person name="Nagy F."/>
            <person name="Merkle T."/>
        </authorList>
    </citation>
    <scope>NUCLEOTIDE SEQUENCE [MRNA]</scope>
    <source>
        <strain>cv. Columbia</strain>
    </source>
</reference>
<reference key="2">
    <citation type="journal article" date="1998" name="DNA Res.">
        <title>Structural analysis of Arabidopsis thaliana chromosome 5. V. Sequence features of the regions of 1,381,565 bp covered by twenty one physically assigned P1 and TAC clones.</title>
        <authorList>
            <person name="Kaneko T."/>
            <person name="Kotani H."/>
            <person name="Nakamura Y."/>
            <person name="Sato S."/>
            <person name="Asamizu E."/>
            <person name="Miyajima N."/>
            <person name="Tabata S."/>
        </authorList>
    </citation>
    <scope>NUCLEOTIDE SEQUENCE [LARGE SCALE GENOMIC DNA]</scope>
    <source>
        <strain>cv. Columbia</strain>
    </source>
</reference>
<reference key="3">
    <citation type="journal article" date="2000" name="Nature">
        <title>Sequence and analysis of chromosome 5 of the plant Arabidopsis thaliana.</title>
        <authorList>
            <person name="Tabata S."/>
            <person name="Kaneko T."/>
            <person name="Nakamura Y."/>
            <person name="Kotani H."/>
            <person name="Kato T."/>
            <person name="Asamizu E."/>
            <person name="Miyajima N."/>
            <person name="Sasamoto S."/>
            <person name="Kimura T."/>
            <person name="Hosouchi T."/>
            <person name="Kawashima K."/>
            <person name="Kohara M."/>
            <person name="Matsumoto M."/>
            <person name="Matsuno A."/>
            <person name="Muraki A."/>
            <person name="Nakayama S."/>
            <person name="Nakazaki N."/>
            <person name="Naruo K."/>
            <person name="Okumura S."/>
            <person name="Shinpo S."/>
            <person name="Takeuchi C."/>
            <person name="Wada T."/>
            <person name="Watanabe A."/>
            <person name="Yamada M."/>
            <person name="Yasuda M."/>
            <person name="Sato S."/>
            <person name="de la Bastide M."/>
            <person name="Huang E."/>
            <person name="Spiegel L."/>
            <person name="Gnoj L."/>
            <person name="O'Shaughnessy A."/>
            <person name="Preston R."/>
            <person name="Habermann K."/>
            <person name="Murray J."/>
            <person name="Johnson D."/>
            <person name="Rohlfing T."/>
            <person name="Nelson J."/>
            <person name="Stoneking T."/>
            <person name="Pepin K."/>
            <person name="Spieth J."/>
            <person name="Sekhon M."/>
            <person name="Armstrong J."/>
            <person name="Becker M."/>
            <person name="Belter E."/>
            <person name="Cordum H."/>
            <person name="Cordes M."/>
            <person name="Courtney L."/>
            <person name="Courtney W."/>
            <person name="Dante M."/>
            <person name="Du H."/>
            <person name="Edwards J."/>
            <person name="Fryman J."/>
            <person name="Haakensen B."/>
            <person name="Lamar E."/>
            <person name="Latreille P."/>
            <person name="Leonard S."/>
            <person name="Meyer R."/>
            <person name="Mulvaney E."/>
            <person name="Ozersky P."/>
            <person name="Riley A."/>
            <person name="Strowmatt C."/>
            <person name="Wagner-McPherson C."/>
            <person name="Wollam A."/>
            <person name="Yoakum M."/>
            <person name="Bell M."/>
            <person name="Dedhia N."/>
            <person name="Parnell L."/>
            <person name="Shah R."/>
            <person name="Rodriguez M."/>
            <person name="Hoon See L."/>
            <person name="Vil D."/>
            <person name="Baker J."/>
            <person name="Kirchoff K."/>
            <person name="Toth K."/>
            <person name="King L."/>
            <person name="Bahret A."/>
            <person name="Miller B."/>
            <person name="Marra M.A."/>
            <person name="Martienssen R."/>
            <person name="McCombie W.R."/>
            <person name="Wilson R.K."/>
            <person name="Murphy G."/>
            <person name="Bancroft I."/>
            <person name="Volckaert G."/>
            <person name="Wambutt R."/>
            <person name="Duesterhoeft A."/>
            <person name="Stiekema W."/>
            <person name="Pohl T."/>
            <person name="Entian K.-D."/>
            <person name="Terryn N."/>
            <person name="Hartley N."/>
            <person name="Bent E."/>
            <person name="Johnson S."/>
            <person name="Langham S.-A."/>
            <person name="McCullagh B."/>
            <person name="Robben J."/>
            <person name="Grymonprez B."/>
            <person name="Zimmermann W."/>
            <person name="Ramsperger U."/>
            <person name="Wedler H."/>
            <person name="Balke K."/>
            <person name="Wedler E."/>
            <person name="Peters S."/>
            <person name="van Staveren M."/>
            <person name="Dirkse W."/>
            <person name="Mooijman P."/>
            <person name="Klein Lankhorst R."/>
            <person name="Weitzenegger T."/>
            <person name="Bothe G."/>
            <person name="Rose M."/>
            <person name="Hauf J."/>
            <person name="Berneiser S."/>
            <person name="Hempel S."/>
            <person name="Feldpausch M."/>
            <person name="Lamberth S."/>
            <person name="Villarroel R."/>
            <person name="Gielen J."/>
            <person name="Ardiles W."/>
            <person name="Bents O."/>
            <person name="Lemcke K."/>
            <person name="Kolesov G."/>
            <person name="Mayer K.F.X."/>
            <person name="Rudd S."/>
            <person name="Schoof H."/>
            <person name="Schueller C."/>
            <person name="Zaccaria P."/>
            <person name="Mewes H.-W."/>
            <person name="Bevan M."/>
            <person name="Fransz P.F."/>
        </authorList>
    </citation>
    <scope>NUCLEOTIDE SEQUENCE [LARGE SCALE GENOMIC DNA]</scope>
    <source>
        <strain>cv. Columbia</strain>
    </source>
</reference>
<reference key="4">
    <citation type="journal article" date="2017" name="Plant J.">
        <title>Araport11: a complete reannotation of the Arabidopsis thaliana reference genome.</title>
        <authorList>
            <person name="Cheng C.Y."/>
            <person name="Krishnakumar V."/>
            <person name="Chan A.P."/>
            <person name="Thibaud-Nissen F."/>
            <person name="Schobel S."/>
            <person name="Town C.D."/>
        </authorList>
    </citation>
    <scope>GENOME REANNOTATION</scope>
    <source>
        <strain>cv. Columbia</strain>
    </source>
</reference>
<reference key="5">
    <citation type="journal article" date="2003" name="Science">
        <title>Empirical analysis of transcriptional activity in the Arabidopsis genome.</title>
        <authorList>
            <person name="Yamada K."/>
            <person name="Lim J."/>
            <person name="Dale J.M."/>
            <person name="Chen H."/>
            <person name="Shinn P."/>
            <person name="Palm C.J."/>
            <person name="Southwick A.M."/>
            <person name="Wu H.C."/>
            <person name="Kim C.J."/>
            <person name="Nguyen M."/>
            <person name="Pham P.K."/>
            <person name="Cheuk R.F."/>
            <person name="Karlin-Newmann G."/>
            <person name="Liu S.X."/>
            <person name="Lam B."/>
            <person name="Sakano H."/>
            <person name="Wu T."/>
            <person name="Yu G."/>
            <person name="Miranda M."/>
            <person name="Quach H.L."/>
            <person name="Tripp M."/>
            <person name="Chang C.H."/>
            <person name="Lee J.M."/>
            <person name="Toriumi M.J."/>
            <person name="Chan M.M."/>
            <person name="Tang C.C."/>
            <person name="Onodera C.S."/>
            <person name="Deng J.M."/>
            <person name="Akiyama K."/>
            <person name="Ansari Y."/>
            <person name="Arakawa T."/>
            <person name="Banh J."/>
            <person name="Banno F."/>
            <person name="Bowser L."/>
            <person name="Brooks S.Y."/>
            <person name="Carninci P."/>
            <person name="Chao Q."/>
            <person name="Choy N."/>
            <person name="Enju A."/>
            <person name="Goldsmith A.D."/>
            <person name="Gurjal M."/>
            <person name="Hansen N.F."/>
            <person name="Hayashizaki Y."/>
            <person name="Johnson-Hopson C."/>
            <person name="Hsuan V.W."/>
            <person name="Iida K."/>
            <person name="Karnes M."/>
            <person name="Khan S."/>
            <person name="Koesema E."/>
            <person name="Ishida J."/>
            <person name="Jiang P.X."/>
            <person name="Jones T."/>
            <person name="Kawai J."/>
            <person name="Kamiya A."/>
            <person name="Meyers C."/>
            <person name="Nakajima M."/>
            <person name="Narusaka M."/>
            <person name="Seki M."/>
            <person name="Sakurai T."/>
            <person name="Satou M."/>
            <person name="Tamse R."/>
            <person name="Vaysberg M."/>
            <person name="Wallender E.K."/>
            <person name="Wong C."/>
            <person name="Yamamura Y."/>
            <person name="Yuan S."/>
            <person name="Shinozaki K."/>
            <person name="Davis R.W."/>
            <person name="Theologis A."/>
            <person name="Ecker J.R."/>
        </authorList>
    </citation>
    <scope>NUCLEOTIDE SEQUENCE [LARGE SCALE MRNA]</scope>
    <source>
        <strain>cv. Columbia</strain>
    </source>
</reference>
<reference key="6">
    <citation type="submission" date="2002-03" db="EMBL/GenBank/DDBJ databases">
        <title>Full-length cDNA from Arabidopsis thaliana.</title>
        <authorList>
            <person name="Brover V.V."/>
            <person name="Troukhan M.E."/>
            <person name="Alexandrov N.A."/>
            <person name="Lu Y.-P."/>
            <person name="Flavell R.B."/>
            <person name="Feldmann K.A."/>
        </authorList>
    </citation>
    <scope>NUCLEOTIDE SEQUENCE [LARGE SCALE MRNA]</scope>
</reference>
<reference key="7">
    <citation type="journal article" date="2008" name="Plant Physiol.">
        <title>The PRA1 gene family in Arabidopsis.</title>
        <authorList>
            <person name="Alvim Kamei C.L."/>
            <person name="Boruc J."/>
            <person name="Vandepoele K."/>
            <person name="Van den Daele H."/>
            <person name="Maes S."/>
            <person name="Russinova E."/>
            <person name="Inze D."/>
            <person name="de Veylder L."/>
        </authorList>
    </citation>
    <scope>SUBCELLULAR LOCATION</scope>
    <scope>TISSUE SPECIFICITY</scope>
    <scope>INTERACTION WITH PRA1B1; PRA1B2; PRA1B3; PRA1B4; PRA1B5 AND PRA1E</scope>
    <scope>GENE FAMILY</scope>
    <scope>NOMENCLATURE</scope>
</reference>
<reference key="8">
    <citation type="journal article" date="2012" name="Mol. Cell. Proteomics">
        <title>Comparative large-scale characterisation of plant vs. mammal proteins reveals similar and idiosyncratic N-alpha acetylation features.</title>
        <authorList>
            <person name="Bienvenut W.V."/>
            <person name="Sumpton D."/>
            <person name="Martinez A."/>
            <person name="Lilla S."/>
            <person name="Espagne C."/>
            <person name="Meinnel T."/>
            <person name="Giglione C."/>
        </authorList>
    </citation>
    <scope>ACETYLATION [LARGE SCALE ANALYSIS] AT ALA-2</scope>
    <scope>CLEAVAGE OF INITIATOR METHIONINE [LARGE SCALE ANALYSIS]</scope>
    <scope>IDENTIFICATION BY MASS SPECTROMETRY [LARGE SCALE ANALYSIS]</scope>
</reference>
<comment type="function">
    <text evidence="1">May be involved in both secretory and endocytic intracellular trafficking in the endosomal/prevacuolar compartments.</text>
</comment>
<comment type="subunit">
    <text evidence="3">Interacts with PRA1B1, PRA1B2, PRA1B3, PRA1B4, PRA1B5 and PRA1E.</text>
</comment>
<comment type="subcellular location">
    <subcellularLocation>
        <location evidence="3">Endoplasmic reticulum membrane</location>
        <topology evidence="3">Multi-pass membrane protein</topology>
    </subcellularLocation>
</comment>
<comment type="tissue specificity">
    <text evidence="3">Expressed in hypocotyls, roots, lateral roots, lateral root caps, columella cells, leaves and stomata.</text>
</comment>
<comment type="similarity">
    <text evidence="4">Belongs to the PRA1 family.</text>
</comment>
<dbReference type="EMBL" id="AJ249728">
    <property type="protein sequence ID" value="CAC80646.1"/>
    <property type="molecule type" value="mRNA"/>
</dbReference>
<dbReference type="EMBL" id="AB010697">
    <property type="protein sequence ID" value="BAB11169.1"/>
    <property type="molecule type" value="Genomic_DNA"/>
</dbReference>
<dbReference type="EMBL" id="AL163652">
    <property type="protein sequence ID" value="CAB87267.1"/>
    <property type="molecule type" value="Genomic_DNA"/>
</dbReference>
<dbReference type="EMBL" id="CP002688">
    <property type="protein sequence ID" value="AED91111.1"/>
    <property type="molecule type" value="Genomic_DNA"/>
</dbReference>
<dbReference type="EMBL" id="AY127009">
    <property type="protein sequence ID" value="AAM83234.1"/>
    <property type="molecule type" value="mRNA"/>
</dbReference>
<dbReference type="EMBL" id="BT000524">
    <property type="protein sequence ID" value="AAN18093.1"/>
    <property type="molecule type" value="mRNA"/>
</dbReference>
<dbReference type="EMBL" id="AY086209">
    <property type="protein sequence ID" value="AAM64287.1"/>
    <property type="molecule type" value="mRNA"/>
</dbReference>
<dbReference type="PIR" id="T48482">
    <property type="entry name" value="T48482"/>
</dbReference>
<dbReference type="RefSeq" id="NP_196328.1">
    <property type="nucleotide sequence ID" value="NM_120793.4"/>
</dbReference>
<dbReference type="BioGRID" id="15881">
    <property type="interactions" value="12"/>
</dbReference>
<dbReference type="FunCoup" id="Q9LYQ4">
    <property type="interactions" value="1627"/>
</dbReference>
<dbReference type="IntAct" id="Q9LYQ4">
    <property type="interactions" value="12"/>
</dbReference>
<dbReference type="STRING" id="3702.Q9LYQ4"/>
<dbReference type="iPTMnet" id="Q9LYQ4"/>
<dbReference type="PaxDb" id="3702-AT5G07110.1"/>
<dbReference type="ProteomicsDB" id="234805"/>
<dbReference type="EnsemblPlants" id="AT5G07110.1">
    <property type="protein sequence ID" value="AT5G07110.1"/>
    <property type="gene ID" value="AT5G07110"/>
</dbReference>
<dbReference type="GeneID" id="830602"/>
<dbReference type="Gramene" id="AT5G07110.1">
    <property type="protein sequence ID" value="AT5G07110.1"/>
    <property type="gene ID" value="AT5G07110"/>
</dbReference>
<dbReference type="KEGG" id="ath:AT5G07110"/>
<dbReference type="Araport" id="AT5G07110"/>
<dbReference type="TAIR" id="AT5G07110">
    <property type="gene designation" value="PRA1.B6"/>
</dbReference>
<dbReference type="eggNOG" id="KOG3142">
    <property type="taxonomic scope" value="Eukaryota"/>
</dbReference>
<dbReference type="HOGENOM" id="CLU_060198_1_0_1"/>
<dbReference type="InParanoid" id="Q9LYQ4"/>
<dbReference type="OMA" id="VRKNAAY"/>
<dbReference type="OrthoDB" id="63113at2759"/>
<dbReference type="PhylomeDB" id="Q9LYQ4"/>
<dbReference type="PRO" id="PR:Q9LYQ4"/>
<dbReference type="Proteomes" id="UP000006548">
    <property type="component" value="Chromosome 5"/>
</dbReference>
<dbReference type="ExpressionAtlas" id="Q9LYQ4">
    <property type="expression patterns" value="baseline and differential"/>
</dbReference>
<dbReference type="GO" id="GO:0005783">
    <property type="term" value="C:endoplasmic reticulum"/>
    <property type="evidence" value="ECO:0000314"/>
    <property type="project" value="TAIR"/>
</dbReference>
<dbReference type="GO" id="GO:0005789">
    <property type="term" value="C:endoplasmic reticulum membrane"/>
    <property type="evidence" value="ECO:0007669"/>
    <property type="project" value="UniProtKB-SubCell"/>
</dbReference>
<dbReference type="GO" id="GO:0005794">
    <property type="term" value="C:Golgi apparatus"/>
    <property type="evidence" value="ECO:0000314"/>
    <property type="project" value="TAIR"/>
</dbReference>
<dbReference type="GO" id="GO:0016192">
    <property type="term" value="P:vesicle-mediated transport"/>
    <property type="evidence" value="ECO:0000314"/>
    <property type="project" value="TAIR"/>
</dbReference>
<dbReference type="InterPro" id="IPR004895">
    <property type="entry name" value="Prenylated_rab_accept_PRA1"/>
</dbReference>
<dbReference type="PANTHER" id="PTHR19317:SF45">
    <property type="entry name" value="PRA1 FAMILY PROTEIN B6"/>
    <property type="match status" value="1"/>
</dbReference>
<dbReference type="PANTHER" id="PTHR19317">
    <property type="entry name" value="PRENYLATED RAB ACCEPTOR 1-RELATED"/>
    <property type="match status" value="1"/>
</dbReference>
<dbReference type="Pfam" id="PF03208">
    <property type="entry name" value="PRA1"/>
    <property type="match status" value="1"/>
</dbReference>
<accession>Q9LYQ4</accession>
<proteinExistence type="evidence at protein level"/>
<evidence type="ECO:0000250" key="1"/>
<evidence type="ECO:0000255" key="2"/>
<evidence type="ECO:0000269" key="3">
    <source>
    </source>
</evidence>
<evidence type="ECO:0000305" key="4"/>
<evidence type="ECO:0007744" key="5">
    <source>
    </source>
</evidence>